<gene>
    <name evidence="7" type="primary">osg-1</name>
    <name evidence="7" type="ORF">R02F2.2/R02F2.3</name>
</gene>
<comment type="function">
    <text evidence="4">Probable guanine nucleotide exchange factor which regulates the Rho GTPase rho-1. Functions in ASE sensory neurons where it promotes neuronal degeneration under conditions of oxidative stress.</text>
</comment>
<comment type="tissue specificity">
    <text evidence="4">Expressed in muscles in the body wall and head, and in the nervous system in neurons including FLP and ASE neurons in the head.</text>
</comment>
<comment type="disruption phenotype">
    <text evidence="4">Viable with normal development, size and lifespan. Reduced sensitivity to factors that induce neurodegeneration. Improved chemosensory response in aging worms.</text>
</comment>
<accession>Q21653</accession>
<proteinExistence type="evidence at transcript level"/>
<organism>
    <name type="scientific">Caenorhabditis elegans</name>
    <dbReference type="NCBI Taxonomy" id="6239"/>
    <lineage>
        <taxon>Eukaryota</taxon>
        <taxon>Metazoa</taxon>
        <taxon>Ecdysozoa</taxon>
        <taxon>Nematoda</taxon>
        <taxon>Chromadorea</taxon>
        <taxon>Rhabditida</taxon>
        <taxon>Rhabditina</taxon>
        <taxon>Rhabditomorpha</taxon>
        <taxon>Rhabditoidea</taxon>
        <taxon>Rhabditidae</taxon>
        <taxon>Peloderinae</taxon>
        <taxon>Caenorhabditis</taxon>
    </lineage>
</organism>
<name>OSG1_CAEEL</name>
<sequence>MLNPNDADDSDSSTDSSPPVAVPRPKRSATVSPSTRNSFYNSRRRSDANLNFFNERERQRERRRSMVRASRERSESRRASQQNLRKTNSEPNVDMPSIDVEALQKLLLSIPKFVSASRNRINQRHDSDSGGEMTTEIEELKDAAKSIQSLQRVLAYPSQTSSDRGGNRRLADPVESCLESSVFSDVDESSLATDTIEGRRSGISTRLGHPRGVMQFIPSIRNDQFVPTSEIRRNSISRKSSVPDGFMTSEMESEPVPNVRNRRRGIVDEMFSSSTSLLVDRPSETLAGVNRFAKLLDTFRSRPTSPEQHPSISWNPYVYSDGGEALETCGMEDSLHEADILLWKKRSRASLRRHYSVRHLAARELLDTEKSFVEGLEFLVTKYMRPLRQPLECTLIEASLVDKIFYRIPEILAHHQVLLTTLSQRIDQWHKDAILGDVLLAHFSKQSMIETYISFVDNFKFAKASIIQARQKHAFEKYYNRCCRDHPNKLDLDSLLISPIQRVPRYELIVKQMLKHTPVEHEDRERLLRAQRHIHCLAVAINQHKDGSEQMEQRLREIEAIVDGLDDLVTKDRTLLRHDIITLKGTDRERCIFMLSDLLLVTSVKKKPKVLYSKMSSQSMGFLEGNRFKLLFKVALEDVQISKDTLSQLEEVERKLESSREDDRVLKKMSQLCSLLKCERKVLMEMLETMETSNSMSIRELNEQMSSDPDLSAVHLDVLTSNGFEPFVLEFPNAEKRSVFEAMFKDAKATLAKNLLAAPSCSLKTIIAHQTRPGLQLCTATVVPGKRVDSTPSLWVCASDKFSGQVAVMALDTGEITIESCSAIGNAAVTAMCTVPPPMKLRKRKIKSQKSLEHLLNETIMDINSSGSDTESSSDEGTSTAGQTTVWIGNDDGEVFVVNSTERVRSRARDRLARLRNSITSICAANGNVLVATSYSNQVQLLLFRPASDGSWDLENPQTVGHVCQAPITSMQLIGRRVIIASGNWLHAYFVDTGKFQPPVEILPSSDVITLMYVTGQNVFLCGRKSTEVFVVDVFNLSIINHFNVVSFVRSQLSGREHILREHKMGCLRISCLTVARSHLWIGTSAGCVLSTSVQSARSQPTPDLRVCEIGHSGPCRILLPVHTPSHSNHPSRKQKRSSLNVPAQQSSQLMLVSCGEGLDDGTATQDPSTDAINHLIFWKCS</sequence>
<keyword id="KW-0175">Coiled coil</keyword>
<keyword id="KW-0344">Guanine-nucleotide releasing factor</keyword>
<keyword id="KW-1185">Reference proteome</keyword>
<evidence type="ECO:0000255" key="1"/>
<evidence type="ECO:0000255" key="2">
    <source>
        <dbReference type="PROSITE-ProRule" id="PRU00062"/>
    </source>
</evidence>
<evidence type="ECO:0000256" key="3">
    <source>
        <dbReference type="SAM" id="MobiDB-lite"/>
    </source>
</evidence>
<evidence type="ECO:0000269" key="4">
    <source>
    </source>
</evidence>
<evidence type="ECO:0000303" key="5">
    <source>
    </source>
</evidence>
<evidence type="ECO:0000305" key="6"/>
<evidence type="ECO:0000312" key="7">
    <source>
        <dbReference type="WormBase" id="R02F2.2"/>
    </source>
</evidence>
<protein>
    <recommendedName>
        <fullName evidence="5">Rho guanine nucleotide exchange factor osg-1</fullName>
    </recommendedName>
    <alternativeName>
        <fullName evidence="7">Oxidative stress-susceptible GEF1</fullName>
    </alternativeName>
</protein>
<reference key="1">
    <citation type="journal article" date="1998" name="Science">
        <title>Genome sequence of the nematode C. elegans: a platform for investigating biology.</title>
        <authorList>
            <consortium name="The C. elegans sequencing consortium"/>
        </authorList>
    </citation>
    <scope>NUCLEOTIDE SEQUENCE [LARGE SCALE GENOMIC DNA]</scope>
    <source>
        <strain>Bristol N2</strain>
    </source>
</reference>
<reference key="2">
    <citation type="journal article" date="2015" name="Genetics">
        <title>Guanine nucleotide exchange factor OSG-1 confers functional aging via dysregulated Rho signaling in Caenorhabditis elegans neurons.</title>
        <authorList>
            <person name="Duan Z."/>
            <person name="Sesti F."/>
        </authorList>
    </citation>
    <scope>FUNCTION</scope>
    <scope>TISSUE SPECIFICITY</scope>
    <scope>DISRUPTION PHENOTYPE</scope>
</reference>
<feature type="chain" id="PRO_0000030435" description="Rho guanine nucleotide exchange factor osg-1" evidence="6">
    <location>
        <begin position="1"/>
        <end position="1182"/>
    </location>
</feature>
<feature type="domain" description="DH" evidence="2">
    <location>
        <begin position="357"/>
        <end position="544"/>
    </location>
</feature>
<feature type="region of interest" description="Disordered" evidence="3">
    <location>
        <begin position="1"/>
        <end position="96"/>
    </location>
</feature>
<feature type="region of interest" description="Disordered" evidence="3">
    <location>
        <begin position="863"/>
        <end position="884"/>
    </location>
</feature>
<feature type="coiled-coil region" evidence="1">
    <location>
        <begin position="637"/>
        <end position="669"/>
    </location>
</feature>
<feature type="coiled-coil region" evidence="1">
    <location>
        <begin position="897"/>
        <end position="922"/>
    </location>
</feature>
<feature type="compositionally biased region" description="Acidic residues" evidence="3">
    <location>
        <begin position="1"/>
        <end position="12"/>
    </location>
</feature>
<feature type="compositionally biased region" description="Polar residues" evidence="3">
    <location>
        <begin position="29"/>
        <end position="41"/>
    </location>
</feature>
<feature type="compositionally biased region" description="Basic and acidic residues" evidence="3">
    <location>
        <begin position="69"/>
        <end position="78"/>
    </location>
</feature>
<feature type="compositionally biased region" description="Low complexity" evidence="3">
    <location>
        <begin position="865"/>
        <end position="879"/>
    </location>
</feature>
<dbReference type="EMBL" id="FO081002">
    <property type="protein sequence ID" value="CCD68397.1"/>
    <property type="molecule type" value="Genomic_DNA"/>
</dbReference>
<dbReference type="RefSeq" id="NP_498172.3">
    <property type="nucleotide sequence ID" value="NM_065771.5"/>
</dbReference>
<dbReference type="SMR" id="Q21653"/>
<dbReference type="FunCoup" id="Q21653">
    <property type="interactions" value="953"/>
</dbReference>
<dbReference type="STRING" id="6239.R02F2.2.1"/>
<dbReference type="PaxDb" id="6239-R02F2.2"/>
<dbReference type="PeptideAtlas" id="Q21653"/>
<dbReference type="EnsemblMetazoa" id="R02F2.2.1">
    <property type="protein sequence ID" value="R02F2.2.1"/>
    <property type="gene ID" value="WBGene00019832"/>
</dbReference>
<dbReference type="GeneID" id="175756"/>
<dbReference type="KEGG" id="cel:CELE_R02F2.2"/>
<dbReference type="AGR" id="WB:WBGene00019832"/>
<dbReference type="CTD" id="175756"/>
<dbReference type="WormBase" id="R02F2.2">
    <property type="protein sequence ID" value="CE39517"/>
    <property type="gene ID" value="WBGene00019832"/>
    <property type="gene designation" value="osg-1"/>
</dbReference>
<dbReference type="eggNOG" id="KOG3522">
    <property type="taxonomic scope" value="Eukaryota"/>
</dbReference>
<dbReference type="GeneTree" id="ENSGT00940000153798"/>
<dbReference type="HOGENOM" id="CLU_001213_2_0_1"/>
<dbReference type="InParanoid" id="Q21653"/>
<dbReference type="OMA" id="IWENALI"/>
<dbReference type="OrthoDB" id="4066896at2759"/>
<dbReference type="PhylomeDB" id="Q21653"/>
<dbReference type="Reactome" id="R-CEL-193648">
    <property type="pathway name" value="NRAGE signals death through JNK"/>
</dbReference>
<dbReference type="Reactome" id="R-CEL-416482">
    <property type="pathway name" value="G alpha (12/13) signalling events"/>
</dbReference>
<dbReference type="Reactome" id="R-CEL-8980692">
    <property type="pathway name" value="RHOA GTPase cycle"/>
</dbReference>
<dbReference type="Reactome" id="R-CEL-9013026">
    <property type="pathway name" value="RHOB GTPase cycle"/>
</dbReference>
<dbReference type="PRO" id="PR:Q21653"/>
<dbReference type="Proteomes" id="UP000001940">
    <property type="component" value="Chromosome III"/>
</dbReference>
<dbReference type="Bgee" id="WBGene00019832">
    <property type="expression patterns" value="Expressed in embryo and 4 other cell types or tissues"/>
</dbReference>
<dbReference type="GO" id="GO:0005737">
    <property type="term" value="C:cytoplasm"/>
    <property type="evidence" value="ECO:0000318"/>
    <property type="project" value="GO_Central"/>
</dbReference>
<dbReference type="GO" id="GO:0005085">
    <property type="term" value="F:guanyl-nucleotide exchange factor activity"/>
    <property type="evidence" value="ECO:0000318"/>
    <property type="project" value="GO_Central"/>
</dbReference>
<dbReference type="GO" id="GO:0030036">
    <property type="term" value="P:actin cytoskeleton organization"/>
    <property type="evidence" value="ECO:0000318"/>
    <property type="project" value="GO_Central"/>
</dbReference>
<dbReference type="GO" id="GO:0035556">
    <property type="term" value="P:intracellular signal transduction"/>
    <property type="evidence" value="ECO:0007669"/>
    <property type="project" value="InterPro"/>
</dbReference>
<dbReference type="GO" id="GO:0006979">
    <property type="term" value="P:response to oxidative stress"/>
    <property type="evidence" value="ECO:0000315"/>
    <property type="project" value="WormBase"/>
</dbReference>
<dbReference type="CDD" id="cd00160">
    <property type="entry name" value="RhoGEF"/>
    <property type="match status" value="1"/>
</dbReference>
<dbReference type="FunFam" id="1.20.900.10:FF:000060">
    <property type="entry name" value="Rho guanine nucleotide exchange factor osg-1"/>
    <property type="match status" value="1"/>
</dbReference>
<dbReference type="Gene3D" id="1.20.900.10">
    <property type="entry name" value="Dbl homology (DH) domain"/>
    <property type="match status" value="1"/>
</dbReference>
<dbReference type="InterPro" id="IPR039919">
    <property type="entry name" value="ARHGEF10/ARHGEF17"/>
</dbReference>
<dbReference type="InterPro" id="IPR035899">
    <property type="entry name" value="DBL_dom_sf"/>
</dbReference>
<dbReference type="InterPro" id="IPR000219">
    <property type="entry name" value="DH_dom"/>
</dbReference>
<dbReference type="InterPro" id="IPR001331">
    <property type="entry name" value="GDS_CDC24_CS"/>
</dbReference>
<dbReference type="InterPro" id="IPR011047">
    <property type="entry name" value="Quinoprotein_ADH-like_sf"/>
</dbReference>
<dbReference type="PANTHER" id="PTHR12877">
    <property type="entry name" value="RHO GUANINE NUCLEOTIDE EXCHANGE FACTOR"/>
    <property type="match status" value="1"/>
</dbReference>
<dbReference type="PANTHER" id="PTHR12877:SF15">
    <property type="entry name" value="RHO GUANINE NUCLEOTIDE EXCHANGE FACTOR 17"/>
    <property type="match status" value="1"/>
</dbReference>
<dbReference type="Pfam" id="PF19057">
    <property type="entry name" value="PH_19"/>
    <property type="match status" value="1"/>
</dbReference>
<dbReference type="Pfam" id="PF00621">
    <property type="entry name" value="RhoGEF"/>
    <property type="match status" value="1"/>
</dbReference>
<dbReference type="Pfam" id="PF19056">
    <property type="entry name" value="WD40_2"/>
    <property type="match status" value="1"/>
</dbReference>
<dbReference type="SMART" id="SM00325">
    <property type="entry name" value="RhoGEF"/>
    <property type="match status" value="1"/>
</dbReference>
<dbReference type="SUPFAM" id="SSF48065">
    <property type="entry name" value="DBL homology domain (DH-domain)"/>
    <property type="match status" value="1"/>
</dbReference>
<dbReference type="SUPFAM" id="SSF50998">
    <property type="entry name" value="Quinoprotein alcohol dehydrogenase-like"/>
    <property type="match status" value="1"/>
</dbReference>
<dbReference type="PROSITE" id="PS00741">
    <property type="entry name" value="DH_1"/>
    <property type="match status" value="1"/>
</dbReference>
<dbReference type="PROSITE" id="PS50010">
    <property type="entry name" value="DH_2"/>
    <property type="match status" value="1"/>
</dbReference>